<evidence type="ECO:0000255" key="1">
    <source>
        <dbReference type="HAMAP-Rule" id="MF_00611"/>
    </source>
</evidence>
<sequence length="309" mass="34747">MSIRIIPQDELGSSEKRTADMIPPLLFPRLKNLYNRRAERLRELAENNPLGDYLRFAALIAHAQEVVLYDHPLEMDLTARIKEASAQGKPPLDIHVLPRDKHWQKLLMALIAELKPEMSGPALAVIENLEKASTQELEDMASALFASDFSSVSSDKAPFIWAALSLYWAQMANLIPGKARAEYGEQRQYCPVCGSMPVSSMVQIGTTQGLRYLHCNLCETEWHVVRVKCSNCEQSGKLHYWSLDDEQAAIKAESCDDCDTYLKILYQEKDPKIEAVADDLASLVLDARMEQEGYARSSINPFLFPGEGE</sequence>
<accession>C5A059</accession>
<organism>
    <name type="scientific">Escherichia coli (strain K12 / MC4100 / BW2952)</name>
    <dbReference type="NCBI Taxonomy" id="595496"/>
    <lineage>
        <taxon>Bacteria</taxon>
        <taxon>Pseudomonadati</taxon>
        <taxon>Pseudomonadota</taxon>
        <taxon>Gammaproteobacteria</taxon>
        <taxon>Enterobacterales</taxon>
        <taxon>Enterobacteriaceae</taxon>
        <taxon>Escherichia</taxon>
    </lineage>
</organism>
<reference key="1">
    <citation type="journal article" date="2009" name="J. Bacteriol.">
        <title>Genomic sequencing reveals regulatory mutations and recombinational events in the widely used MC4100 lineage of Escherichia coli K-12.</title>
        <authorList>
            <person name="Ferenci T."/>
            <person name="Zhou Z."/>
            <person name="Betteridge T."/>
            <person name="Ren Y."/>
            <person name="Liu Y."/>
            <person name="Feng L."/>
            <person name="Reeves P.R."/>
            <person name="Wang L."/>
        </authorList>
    </citation>
    <scope>NUCLEOTIDE SEQUENCE [LARGE SCALE GENOMIC DNA]</scope>
    <source>
        <strain>K12 / MC4100 / BW2952</strain>
    </source>
</reference>
<comment type="function">
    <text evidence="1">Necessary for formate dehydrogenase activity.</text>
</comment>
<comment type="subcellular location">
    <subcellularLocation>
        <location evidence="1">Cytoplasm</location>
    </subcellularLocation>
</comment>
<comment type="similarity">
    <text evidence="1">Belongs to the FdhE family.</text>
</comment>
<name>FDHE_ECOBW</name>
<keyword id="KW-0963">Cytoplasm</keyword>
<feature type="chain" id="PRO_1000212265" description="Protein FdhE">
    <location>
        <begin position="1"/>
        <end position="309"/>
    </location>
</feature>
<protein>
    <recommendedName>
        <fullName evidence="1">Protein FdhE</fullName>
    </recommendedName>
</protein>
<dbReference type="EMBL" id="CP001396">
    <property type="protein sequence ID" value="ACR63124.1"/>
    <property type="molecule type" value="Genomic_DNA"/>
</dbReference>
<dbReference type="RefSeq" id="WP_000027703.1">
    <property type="nucleotide sequence ID" value="NC_012759.1"/>
</dbReference>
<dbReference type="SMR" id="C5A059"/>
<dbReference type="KEGG" id="ebw:BWG_3561"/>
<dbReference type="HOGENOM" id="CLU_055275_0_0_6"/>
<dbReference type="GO" id="GO:0005829">
    <property type="term" value="C:cytosol"/>
    <property type="evidence" value="ECO:0007669"/>
    <property type="project" value="TreeGrafter"/>
</dbReference>
<dbReference type="GO" id="GO:0008199">
    <property type="term" value="F:ferric iron binding"/>
    <property type="evidence" value="ECO:0007669"/>
    <property type="project" value="TreeGrafter"/>
</dbReference>
<dbReference type="GO" id="GO:0051604">
    <property type="term" value="P:protein maturation"/>
    <property type="evidence" value="ECO:0007669"/>
    <property type="project" value="TreeGrafter"/>
</dbReference>
<dbReference type="CDD" id="cd16341">
    <property type="entry name" value="FdhE"/>
    <property type="match status" value="1"/>
</dbReference>
<dbReference type="FunFam" id="3.90.1670.10:FF:000001">
    <property type="entry name" value="Protein FdhE"/>
    <property type="match status" value="1"/>
</dbReference>
<dbReference type="Gene3D" id="3.90.1670.10">
    <property type="entry name" value="FdhE-like domain"/>
    <property type="match status" value="1"/>
</dbReference>
<dbReference type="HAMAP" id="MF_00611">
    <property type="entry name" value="FdeH"/>
    <property type="match status" value="1"/>
</dbReference>
<dbReference type="InterPro" id="IPR024064">
    <property type="entry name" value="FdhE-like_sf"/>
</dbReference>
<dbReference type="InterPro" id="IPR056796">
    <property type="entry name" value="FdhE_C"/>
</dbReference>
<dbReference type="InterPro" id="IPR056797">
    <property type="entry name" value="FdhE_central"/>
</dbReference>
<dbReference type="InterPro" id="IPR056774">
    <property type="entry name" value="FdhE_N"/>
</dbReference>
<dbReference type="InterPro" id="IPR006452">
    <property type="entry name" value="Formate_DH_accessory"/>
</dbReference>
<dbReference type="NCBIfam" id="TIGR01562">
    <property type="entry name" value="FdhE"/>
    <property type="match status" value="1"/>
</dbReference>
<dbReference type="NCBIfam" id="NF002925">
    <property type="entry name" value="PRK03564.1"/>
    <property type="match status" value="1"/>
</dbReference>
<dbReference type="PANTHER" id="PTHR37689">
    <property type="entry name" value="PROTEIN FDHE"/>
    <property type="match status" value="1"/>
</dbReference>
<dbReference type="PANTHER" id="PTHR37689:SF1">
    <property type="entry name" value="PROTEIN FDHE"/>
    <property type="match status" value="1"/>
</dbReference>
<dbReference type="Pfam" id="PF24860">
    <property type="entry name" value="FdhE_C"/>
    <property type="match status" value="1"/>
</dbReference>
<dbReference type="Pfam" id="PF24859">
    <property type="entry name" value="FdhE_central"/>
    <property type="match status" value="1"/>
</dbReference>
<dbReference type="Pfam" id="PF04216">
    <property type="entry name" value="FdhE_N"/>
    <property type="match status" value="1"/>
</dbReference>
<dbReference type="PIRSF" id="PIRSF018296">
    <property type="entry name" value="Format_dh_formtn"/>
    <property type="match status" value="1"/>
</dbReference>
<dbReference type="SUPFAM" id="SSF144020">
    <property type="entry name" value="FdhE-like"/>
    <property type="match status" value="1"/>
</dbReference>
<gene>
    <name evidence="1" type="primary">fdhE</name>
    <name type="ordered locus">BWG_3561</name>
</gene>
<proteinExistence type="inferred from homology"/>